<accession>A1JS31</accession>
<organism>
    <name type="scientific">Yersinia enterocolitica serotype O:8 / biotype 1B (strain NCTC 13174 / 8081)</name>
    <dbReference type="NCBI Taxonomy" id="393305"/>
    <lineage>
        <taxon>Bacteria</taxon>
        <taxon>Pseudomonadati</taxon>
        <taxon>Pseudomonadota</taxon>
        <taxon>Gammaproteobacteria</taxon>
        <taxon>Enterobacterales</taxon>
        <taxon>Yersiniaceae</taxon>
        <taxon>Yersinia</taxon>
    </lineage>
</organism>
<comment type="function">
    <text evidence="1">This protein binds specifically to 23S rRNA; its binding is stimulated by other ribosomal proteins, e.g. L4, L17, and L20. It is important during the early stages of 50S assembly. It makes multiple contacts with different domains of the 23S rRNA in the assembled 50S subunit and ribosome (By similarity).</text>
</comment>
<comment type="function">
    <text evidence="1">The globular domain of the protein is located near the polypeptide exit tunnel on the outside of the subunit, while an extended beta-hairpin is found that lines the wall of the exit tunnel in the center of the 70S ribosome.</text>
</comment>
<comment type="subunit">
    <text evidence="1">Part of the 50S ribosomal subunit.</text>
</comment>
<comment type="similarity">
    <text evidence="1">Belongs to the universal ribosomal protein uL22 family.</text>
</comment>
<feature type="chain" id="PRO_1000052674" description="Large ribosomal subunit protein uL22">
    <location>
        <begin position="1"/>
        <end position="110"/>
    </location>
</feature>
<proteinExistence type="inferred from homology"/>
<protein>
    <recommendedName>
        <fullName evidence="1">Large ribosomal subunit protein uL22</fullName>
    </recommendedName>
    <alternativeName>
        <fullName evidence="2">50S ribosomal protein L22</fullName>
    </alternativeName>
</protein>
<reference key="1">
    <citation type="journal article" date="2006" name="PLoS Genet.">
        <title>The complete genome sequence and comparative genome analysis of the high pathogenicity Yersinia enterocolitica strain 8081.</title>
        <authorList>
            <person name="Thomson N.R."/>
            <person name="Howard S."/>
            <person name="Wren B.W."/>
            <person name="Holden M.T.G."/>
            <person name="Crossman L."/>
            <person name="Challis G.L."/>
            <person name="Churcher C."/>
            <person name="Mungall K."/>
            <person name="Brooks K."/>
            <person name="Chillingworth T."/>
            <person name="Feltwell T."/>
            <person name="Abdellah Z."/>
            <person name="Hauser H."/>
            <person name="Jagels K."/>
            <person name="Maddison M."/>
            <person name="Moule S."/>
            <person name="Sanders M."/>
            <person name="Whitehead S."/>
            <person name="Quail M.A."/>
            <person name="Dougan G."/>
            <person name="Parkhill J."/>
            <person name="Prentice M.B."/>
        </authorList>
    </citation>
    <scope>NUCLEOTIDE SEQUENCE [LARGE SCALE GENOMIC DNA]</scope>
    <source>
        <strain>NCTC 13174 / 8081</strain>
    </source>
</reference>
<sequence length="110" mass="12156">METIAKHRHARSSAQKVRLVADLIRGKKVSQALETLAYTNKKAAGLVKKVLESAIANAEHNDGADIDDLKVTKIFVDEGPSMKRIMPRAKGRADRILKRTSHITVVVSDR</sequence>
<name>RL22_YERE8</name>
<gene>
    <name evidence="1" type="primary">rplV</name>
    <name type="ordered locus">YE3918</name>
</gene>
<evidence type="ECO:0000255" key="1">
    <source>
        <dbReference type="HAMAP-Rule" id="MF_01331"/>
    </source>
</evidence>
<evidence type="ECO:0000305" key="2"/>
<keyword id="KW-0687">Ribonucleoprotein</keyword>
<keyword id="KW-0689">Ribosomal protein</keyword>
<keyword id="KW-0694">RNA-binding</keyword>
<keyword id="KW-0699">rRNA-binding</keyword>
<dbReference type="EMBL" id="AM286415">
    <property type="protein sequence ID" value="CAL13937.1"/>
    <property type="molecule type" value="Genomic_DNA"/>
</dbReference>
<dbReference type="RefSeq" id="WP_004391423.1">
    <property type="nucleotide sequence ID" value="NC_008800.1"/>
</dbReference>
<dbReference type="RefSeq" id="YP_001008063.1">
    <property type="nucleotide sequence ID" value="NC_008800.1"/>
</dbReference>
<dbReference type="SMR" id="A1JS31"/>
<dbReference type="GeneID" id="95418939"/>
<dbReference type="KEGG" id="yen:YE3918"/>
<dbReference type="PATRIC" id="fig|393305.7.peg.4168"/>
<dbReference type="eggNOG" id="COG0091">
    <property type="taxonomic scope" value="Bacteria"/>
</dbReference>
<dbReference type="HOGENOM" id="CLU_083987_3_3_6"/>
<dbReference type="OrthoDB" id="9805969at2"/>
<dbReference type="PRO" id="PR:A1JS31"/>
<dbReference type="Proteomes" id="UP000000642">
    <property type="component" value="Chromosome"/>
</dbReference>
<dbReference type="GO" id="GO:0022625">
    <property type="term" value="C:cytosolic large ribosomal subunit"/>
    <property type="evidence" value="ECO:0007669"/>
    <property type="project" value="TreeGrafter"/>
</dbReference>
<dbReference type="GO" id="GO:0019843">
    <property type="term" value="F:rRNA binding"/>
    <property type="evidence" value="ECO:0007669"/>
    <property type="project" value="UniProtKB-UniRule"/>
</dbReference>
<dbReference type="GO" id="GO:0003735">
    <property type="term" value="F:structural constituent of ribosome"/>
    <property type="evidence" value="ECO:0007669"/>
    <property type="project" value="InterPro"/>
</dbReference>
<dbReference type="GO" id="GO:0006412">
    <property type="term" value="P:translation"/>
    <property type="evidence" value="ECO:0007669"/>
    <property type="project" value="UniProtKB-UniRule"/>
</dbReference>
<dbReference type="CDD" id="cd00336">
    <property type="entry name" value="Ribosomal_L22"/>
    <property type="match status" value="1"/>
</dbReference>
<dbReference type="FunFam" id="3.90.470.10:FF:000001">
    <property type="entry name" value="50S ribosomal protein L22"/>
    <property type="match status" value="1"/>
</dbReference>
<dbReference type="Gene3D" id="3.90.470.10">
    <property type="entry name" value="Ribosomal protein L22/L17"/>
    <property type="match status" value="1"/>
</dbReference>
<dbReference type="HAMAP" id="MF_01331_B">
    <property type="entry name" value="Ribosomal_uL22_B"/>
    <property type="match status" value="1"/>
</dbReference>
<dbReference type="InterPro" id="IPR001063">
    <property type="entry name" value="Ribosomal_uL22"/>
</dbReference>
<dbReference type="InterPro" id="IPR005727">
    <property type="entry name" value="Ribosomal_uL22_bac/chlpt-type"/>
</dbReference>
<dbReference type="InterPro" id="IPR047867">
    <property type="entry name" value="Ribosomal_uL22_bac/org-type"/>
</dbReference>
<dbReference type="InterPro" id="IPR018260">
    <property type="entry name" value="Ribosomal_uL22_CS"/>
</dbReference>
<dbReference type="InterPro" id="IPR036394">
    <property type="entry name" value="Ribosomal_uL22_sf"/>
</dbReference>
<dbReference type="NCBIfam" id="TIGR01044">
    <property type="entry name" value="rplV_bact"/>
    <property type="match status" value="1"/>
</dbReference>
<dbReference type="PANTHER" id="PTHR13501">
    <property type="entry name" value="CHLOROPLAST 50S RIBOSOMAL PROTEIN L22-RELATED"/>
    <property type="match status" value="1"/>
</dbReference>
<dbReference type="PANTHER" id="PTHR13501:SF8">
    <property type="entry name" value="LARGE RIBOSOMAL SUBUNIT PROTEIN UL22M"/>
    <property type="match status" value="1"/>
</dbReference>
<dbReference type="Pfam" id="PF00237">
    <property type="entry name" value="Ribosomal_L22"/>
    <property type="match status" value="1"/>
</dbReference>
<dbReference type="SUPFAM" id="SSF54843">
    <property type="entry name" value="Ribosomal protein L22"/>
    <property type="match status" value="1"/>
</dbReference>
<dbReference type="PROSITE" id="PS00464">
    <property type="entry name" value="RIBOSOMAL_L22"/>
    <property type="match status" value="1"/>
</dbReference>